<name>UCRI_SCHPO</name>
<proteinExistence type="evidence at protein level"/>
<protein>
    <recommendedName>
        <fullName>Cytochrome b-c1 complex subunit Rieske, mitochondrial</fullName>
        <ecNumber>7.1.1.8</ecNumber>
    </recommendedName>
    <alternativeName>
        <fullName>Complex III subunit 5</fullName>
    </alternativeName>
    <alternativeName>
        <fullName>Rieske iron-sulfur protein</fullName>
        <shortName>RISP</shortName>
    </alternativeName>
    <alternativeName>
        <fullName>Ubiquinol-cytochrome c reductase iron-sulfur subunit</fullName>
    </alternativeName>
</protein>
<sequence>MLAKQFISKSLASSLRRLLPVSSTASSLKGSMMTIPKFTSIRTYTDSPEMPDFSEYQTKSTGDRSRVISYAMVGTMGALTAAGAQATVHDFLASWSASADVLAMSKAEVDLSKIPEGKNLVVKWQGKPVFIRHRTPEEIQEANSVDISTLRDPQADSDRVQKPEWLVMIGVCTHLGCVPIGEAGDYGGWFCPCHGSHYDISGRIRRGPAPLNLAIPAYTFEGSKIIIG</sequence>
<accession>Q09154</accession>
<accession>O42942</accession>
<keyword id="KW-0001">2Fe-2S</keyword>
<keyword id="KW-0002">3D-structure</keyword>
<keyword id="KW-1015">Disulfide bond</keyword>
<keyword id="KW-0249">Electron transport</keyword>
<keyword id="KW-0408">Iron</keyword>
<keyword id="KW-0411">Iron-sulfur</keyword>
<keyword id="KW-0472">Membrane</keyword>
<keyword id="KW-0479">Metal-binding</keyword>
<keyword id="KW-0496">Mitochondrion</keyword>
<keyword id="KW-0999">Mitochondrion inner membrane</keyword>
<keyword id="KW-1185">Reference proteome</keyword>
<keyword id="KW-0679">Respiratory chain</keyword>
<keyword id="KW-0809">Transit peptide</keyword>
<keyword id="KW-1278">Translocase</keyword>
<keyword id="KW-0812">Transmembrane</keyword>
<keyword id="KW-1133">Transmembrane helix</keyword>
<keyword id="KW-0813">Transport</keyword>
<evidence type="ECO:0000250" key="1">
    <source>
        <dbReference type="UniProtKB" id="P08067"/>
    </source>
</evidence>
<evidence type="ECO:0000255" key="2"/>
<evidence type="ECO:0000255" key="3">
    <source>
        <dbReference type="PROSITE-ProRule" id="PRU00628"/>
    </source>
</evidence>
<evidence type="ECO:0000305" key="4"/>
<dbReference type="EC" id="7.1.1.8"/>
<dbReference type="EMBL" id="U40480">
    <property type="protein sequence ID" value="AAC49359.1"/>
    <property type="molecule type" value="mRNA"/>
</dbReference>
<dbReference type="EMBL" id="CU329671">
    <property type="protein sequence ID" value="CAA17904.1"/>
    <property type="molecule type" value="Genomic_DNA"/>
</dbReference>
<dbReference type="PIR" id="T39619">
    <property type="entry name" value="T39619"/>
</dbReference>
<dbReference type="RefSeq" id="NP_595941.1">
    <property type="nucleotide sequence ID" value="NM_001021849.2"/>
</dbReference>
<dbReference type="PDB" id="8Q1B">
    <property type="method" value="EM"/>
    <property type="resolution" value="3.40 A"/>
    <property type="chains" value="E/P=1-228"/>
</dbReference>
<dbReference type="PDBsum" id="8Q1B"/>
<dbReference type="EMDB" id="EMD-18062"/>
<dbReference type="SMR" id="Q09154"/>
<dbReference type="BioGRID" id="276613">
    <property type="interactions" value="4"/>
</dbReference>
<dbReference type="ComplexPortal" id="CPX-9308">
    <property type="entry name" value="Mitochondrial respiratory chain complex III"/>
</dbReference>
<dbReference type="FunCoup" id="Q09154">
    <property type="interactions" value="309"/>
</dbReference>
<dbReference type="STRING" id="284812.Q09154"/>
<dbReference type="iPTMnet" id="Q09154"/>
<dbReference type="PaxDb" id="4896-SPBC16H5.06.1"/>
<dbReference type="EnsemblFungi" id="SPBC16H5.06.1">
    <property type="protein sequence ID" value="SPBC16H5.06.1:pep"/>
    <property type="gene ID" value="SPBC16H5.06"/>
</dbReference>
<dbReference type="GeneID" id="2540075"/>
<dbReference type="KEGG" id="spo:2540075"/>
<dbReference type="PomBase" id="SPBC16H5.06">
    <property type="gene designation" value="rip1"/>
</dbReference>
<dbReference type="VEuPathDB" id="FungiDB:SPBC16H5.06"/>
<dbReference type="eggNOG" id="KOG1671">
    <property type="taxonomic scope" value="Eukaryota"/>
</dbReference>
<dbReference type="HOGENOM" id="CLU_055690_0_0_1"/>
<dbReference type="InParanoid" id="Q09154"/>
<dbReference type="OMA" id="PPYDFND"/>
<dbReference type="PhylomeDB" id="Q09154"/>
<dbReference type="Reactome" id="R-SPO-611105">
    <property type="pathway name" value="Respiratory electron transport"/>
</dbReference>
<dbReference type="Reactome" id="R-SPO-9865881">
    <property type="pathway name" value="Complex III assembly"/>
</dbReference>
<dbReference type="PRO" id="PR:Q09154"/>
<dbReference type="Proteomes" id="UP000002485">
    <property type="component" value="Chromosome II"/>
</dbReference>
<dbReference type="GO" id="GO:0005743">
    <property type="term" value="C:mitochondrial inner membrane"/>
    <property type="evidence" value="ECO:0000305"/>
    <property type="project" value="PomBase"/>
</dbReference>
<dbReference type="GO" id="GO:0005739">
    <property type="term" value="C:mitochondrion"/>
    <property type="evidence" value="ECO:0007005"/>
    <property type="project" value="PomBase"/>
</dbReference>
<dbReference type="GO" id="GO:0045275">
    <property type="term" value="C:respiratory chain complex III"/>
    <property type="evidence" value="ECO:0000316"/>
    <property type="project" value="PomBase"/>
</dbReference>
<dbReference type="GO" id="GO:0051537">
    <property type="term" value="F:2 iron, 2 sulfur cluster binding"/>
    <property type="evidence" value="ECO:0007669"/>
    <property type="project" value="UniProtKB-KW"/>
</dbReference>
<dbReference type="GO" id="GO:0046872">
    <property type="term" value="F:metal ion binding"/>
    <property type="evidence" value="ECO:0007669"/>
    <property type="project" value="UniProtKB-KW"/>
</dbReference>
<dbReference type="GO" id="GO:0016491">
    <property type="term" value="F:oxidoreductase activity"/>
    <property type="evidence" value="ECO:0000318"/>
    <property type="project" value="GO_Central"/>
</dbReference>
<dbReference type="GO" id="GO:0008121">
    <property type="term" value="F:ubiquinol-cytochrome-c reductase activity"/>
    <property type="evidence" value="ECO:0007669"/>
    <property type="project" value="UniProtKB-EC"/>
</dbReference>
<dbReference type="GO" id="GO:0006122">
    <property type="term" value="P:mitochondrial electron transport, ubiquinol to cytochrome c"/>
    <property type="evidence" value="ECO:0000316"/>
    <property type="project" value="PomBase"/>
</dbReference>
<dbReference type="CDD" id="cd03470">
    <property type="entry name" value="Rieske_cytochrome_bc1"/>
    <property type="match status" value="1"/>
</dbReference>
<dbReference type="FunFam" id="2.102.10.10:FF:000001">
    <property type="entry name" value="Cytochrome b-c1 complex subunit Rieske, mitochondrial"/>
    <property type="match status" value="1"/>
</dbReference>
<dbReference type="Gene3D" id="2.102.10.10">
    <property type="entry name" value="Rieske [2Fe-2S] iron-sulphur domain"/>
    <property type="match status" value="1"/>
</dbReference>
<dbReference type="Gene3D" id="1.20.5.270">
    <property type="entry name" value="Ubiquinol cytochrome reductase, transmembrane domain"/>
    <property type="match status" value="1"/>
</dbReference>
<dbReference type="InterPro" id="IPR037008">
    <property type="entry name" value="bc1_Rieske_TM_sf"/>
</dbReference>
<dbReference type="InterPro" id="IPR017941">
    <property type="entry name" value="Rieske_2Fe-2S"/>
</dbReference>
<dbReference type="InterPro" id="IPR036922">
    <property type="entry name" value="Rieske_2Fe-2S_sf"/>
</dbReference>
<dbReference type="InterPro" id="IPR014349">
    <property type="entry name" value="Rieske_Fe-S_prot"/>
</dbReference>
<dbReference type="InterPro" id="IPR005805">
    <property type="entry name" value="Rieske_Fe-S_prot_C"/>
</dbReference>
<dbReference type="InterPro" id="IPR004192">
    <property type="entry name" value="Rieske_TM"/>
</dbReference>
<dbReference type="InterPro" id="IPR006317">
    <property type="entry name" value="Ubiquinol_cyt_c_Rdtase_Fe-S-su"/>
</dbReference>
<dbReference type="NCBIfam" id="TIGR01416">
    <property type="entry name" value="Rieske_proteo"/>
    <property type="match status" value="1"/>
</dbReference>
<dbReference type="PANTHER" id="PTHR10134">
    <property type="entry name" value="CYTOCHROME B-C1 COMPLEX SUBUNIT RIESKE, MITOCHONDRIAL"/>
    <property type="match status" value="1"/>
</dbReference>
<dbReference type="Pfam" id="PF00355">
    <property type="entry name" value="Rieske"/>
    <property type="match status" value="1"/>
</dbReference>
<dbReference type="Pfam" id="PF02921">
    <property type="entry name" value="UCR_TM"/>
    <property type="match status" value="1"/>
</dbReference>
<dbReference type="PRINTS" id="PR00162">
    <property type="entry name" value="RIESKE"/>
</dbReference>
<dbReference type="SUPFAM" id="SSF50022">
    <property type="entry name" value="ISP domain"/>
    <property type="match status" value="1"/>
</dbReference>
<dbReference type="SUPFAM" id="SSF81502">
    <property type="entry name" value="ISP transmembrane anchor"/>
    <property type="match status" value="1"/>
</dbReference>
<dbReference type="PROSITE" id="PS51296">
    <property type="entry name" value="RIESKE"/>
    <property type="match status" value="1"/>
</dbReference>
<gene>
    <name type="primary">rip1</name>
    <name type="ORF">SPBC16H5.06</name>
</gene>
<reference key="1">
    <citation type="journal article" date="1996" name="J. Biol. Chem.">
        <title>Heterologous complementation of a Rieske iron-sulfur protein-deficient Saccharomyces cerevisiae by the Rip1 gene of Schizosaccharomyces pombe.</title>
        <authorList>
            <person name="Dirago J."/>
            <person name="Bruel C."/>
            <person name="Graham L.A."/>
            <person name="Slonimski P."/>
            <person name="Trumpower B.L."/>
        </authorList>
    </citation>
    <scope>NUCLEOTIDE SEQUENCE [MRNA]</scope>
</reference>
<reference key="2">
    <citation type="journal article" date="2002" name="Nature">
        <title>The genome sequence of Schizosaccharomyces pombe.</title>
        <authorList>
            <person name="Wood V."/>
            <person name="Gwilliam R."/>
            <person name="Rajandream M.A."/>
            <person name="Lyne M.H."/>
            <person name="Lyne R."/>
            <person name="Stewart A."/>
            <person name="Sgouros J.G."/>
            <person name="Peat N."/>
            <person name="Hayles J."/>
            <person name="Baker S.G."/>
            <person name="Basham D."/>
            <person name="Bowman S."/>
            <person name="Brooks K."/>
            <person name="Brown D."/>
            <person name="Brown S."/>
            <person name="Chillingworth T."/>
            <person name="Churcher C.M."/>
            <person name="Collins M."/>
            <person name="Connor R."/>
            <person name="Cronin A."/>
            <person name="Davis P."/>
            <person name="Feltwell T."/>
            <person name="Fraser A."/>
            <person name="Gentles S."/>
            <person name="Goble A."/>
            <person name="Hamlin N."/>
            <person name="Harris D.E."/>
            <person name="Hidalgo J."/>
            <person name="Hodgson G."/>
            <person name="Holroyd S."/>
            <person name="Hornsby T."/>
            <person name="Howarth S."/>
            <person name="Huckle E.J."/>
            <person name="Hunt S."/>
            <person name="Jagels K."/>
            <person name="James K.D."/>
            <person name="Jones L."/>
            <person name="Jones M."/>
            <person name="Leather S."/>
            <person name="McDonald S."/>
            <person name="McLean J."/>
            <person name="Mooney P."/>
            <person name="Moule S."/>
            <person name="Mungall K.L."/>
            <person name="Murphy L.D."/>
            <person name="Niblett D."/>
            <person name="Odell C."/>
            <person name="Oliver K."/>
            <person name="O'Neil S."/>
            <person name="Pearson D."/>
            <person name="Quail M.A."/>
            <person name="Rabbinowitsch E."/>
            <person name="Rutherford K.M."/>
            <person name="Rutter S."/>
            <person name="Saunders D."/>
            <person name="Seeger K."/>
            <person name="Sharp S."/>
            <person name="Skelton J."/>
            <person name="Simmonds M.N."/>
            <person name="Squares R."/>
            <person name="Squares S."/>
            <person name="Stevens K."/>
            <person name="Taylor K."/>
            <person name="Taylor R.G."/>
            <person name="Tivey A."/>
            <person name="Walsh S.V."/>
            <person name="Warren T."/>
            <person name="Whitehead S."/>
            <person name="Woodward J.R."/>
            <person name="Volckaert G."/>
            <person name="Aert R."/>
            <person name="Robben J."/>
            <person name="Grymonprez B."/>
            <person name="Weltjens I."/>
            <person name="Vanstreels E."/>
            <person name="Rieger M."/>
            <person name="Schaefer M."/>
            <person name="Mueller-Auer S."/>
            <person name="Gabel C."/>
            <person name="Fuchs M."/>
            <person name="Duesterhoeft A."/>
            <person name="Fritzc C."/>
            <person name="Holzer E."/>
            <person name="Moestl D."/>
            <person name="Hilbert H."/>
            <person name="Borzym K."/>
            <person name="Langer I."/>
            <person name="Beck A."/>
            <person name="Lehrach H."/>
            <person name="Reinhardt R."/>
            <person name="Pohl T.M."/>
            <person name="Eger P."/>
            <person name="Zimmermann W."/>
            <person name="Wedler H."/>
            <person name="Wambutt R."/>
            <person name="Purnelle B."/>
            <person name="Goffeau A."/>
            <person name="Cadieu E."/>
            <person name="Dreano S."/>
            <person name="Gloux S."/>
            <person name="Lelaure V."/>
            <person name="Mottier S."/>
            <person name="Galibert F."/>
            <person name="Aves S.J."/>
            <person name="Xiang Z."/>
            <person name="Hunt C."/>
            <person name="Moore K."/>
            <person name="Hurst S.M."/>
            <person name="Lucas M."/>
            <person name="Rochet M."/>
            <person name="Gaillardin C."/>
            <person name="Tallada V.A."/>
            <person name="Garzon A."/>
            <person name="Thode G."/>
            <person name="Daga R.R."/>
            <person name="Cruzado L."/>
            <person name="Jimenez J."/>
            <person name="Sanchez M."/>
            <person name="del Rey F."/>
            <person name="Benito J."/>
            <person name="Dominguez A."/>
            <person name="Revuelta J.L."/>
            <person name="Moreno S."/>
            <person name="Armstrong J."/>
            <person name="Forsburg S.L."/>
            <person name="Cerutti L."/>
            <person name="Lowe T."/>
            <person name="McCombie W.R."/>
            <person name="Paulsen I."/>
            <person name="Potashkin J."/>
            <person name="Shpakovski G.V."/>
            <person name="Ussery D."/>
            <person name="Barrell B.G."/>
            <person name="Nurse P."/>
        </authorList>
    </citation>
    <scope>NUCLEOTIDE SEQUENCE [LARGE SCALE GENOMIC DNA]</scope>
    <source>
        <strain>972 / ATCC 24843</strain>
    </source>
</reference>
<comment type="function">
    <text evidence="1">Component of the ubiquinol-cytochrome c oxidoreductase, a multisubunit transmembrane complex that is part of the mitochondrial electron transport chain which drives oxidative phosphorylation. The respiratory chain contains 3 multisubunit complexes succinate dehydrogenase (complex II, CII), ubiquinol-cytochrome c oxidoreductase (cytochrome b-c1 complex, complex III, CIII) and cytochrome c oxidase (complex IV, CIV), that cooperate to transfer electrons derived from NADH and succinate to molecular oxygen, creating an electrochemical gradient over the inner membrane that drives transmembrane transport and the ATP synthase. The cytochrome b-c1 complex catalyzes electron transfer from ubiquinol to cytochrome c, linking this redox reaction to translocation of protons across the mitochondrial inner membrane, with protons being carried across the membrane as hydrogens on the quinol. In the process called Q cycle, 2 protons are consumed from the matrix, 4 protons are released into the intermembrane space and 2 electrons are passed to cytochrome c. The Rieske protein is a catalytic core subunit containing a [2Fe-2S] iron-sulfur cluster. It cycles between 2 conformational states during catalysis to transfer electrons from the quinol bound in the Q(0) site in cytochrome b to cytochrome c1.</text>
</comment>
<comment type="catalytic activity">
    <reaction evidence="1">
        <text>a quinol + 2 Fe(III)-[cytochrome c](out) = a quinone + 2 Fe(II)-[cytochrome c](out) + 2 H(+)(out)</text>
        <dbReference type="Rhea" id="RHEA:11484"/>
        <dbReference type="Rhea" id="RHEA-COMP:10350"/>
        <dbReference type="Rhea" id="RHEA-COMP:14399"/>
        <dbReference type="ChEBI" id="CHEBI:15378"/>
        <dbReference type="ChEBI" id="CHEBI:24646"/>
        <dbReference type="ChEBI" id="CHEBI:29033"/>
        <dbReference type="ChEBI" id="CHEBI:29034"/>
        <dbReference type="ChEBI" id="CHEBI:132124"/>
        <dbReference type="EC" id="7.1.1.8"/>
    </reaction>
</comment>
<comment type="cofactor">
    <cofactor evidence="3">
        <name>[2Fe-2S] cluster</name>
        <dbReference type="ChEBI" id="CHEBI:190135"/>
    </cofactor>
    <text evidence="3">Binds 1 [2Fe-2S] cluster per subunit.</text>
</comment>
<comment type="subunit">
    <text evidence="1">Component of the ubiquinol-cytochrome c oxidoreductase (cytochrome b-c1 complex, complex III, CIII), a multisubunit enzyme composed of 3 respiratory subunits cytochrome b, cytochrome c1 and Rieske protein, 2 core protein subunits, and additional low-molecular weight protein subunits. The complex exists as an obligatory dimer and forms supercomplexes (SCs) in the inner mitochondrial membrane with cytochrome c oxidase (complex IV, CIV).</text>
</comment>
<comment type="subcellular location">
    <subcellularLocation>
        <location evidence="1">Mitochondrion inner membrane</location>
        <topology evidence="1">Single-pass membrane protein</topology>
    </subcellularLocation>
</comment>
<comment type="miscellaneous">
    <text>The Rieske protein is a high potential 2Fe-2S protein.</text>
</comment>
<comment type="similarity">
    <text evidence="4">Belongs to the Rieske iron-sulfur protein family.</text>
</comment>
<organism>
    <name type="scientific">Schizosaccharomyces pombe (strain 972 / ATCC 24843)</name>
    <name type="common">Fission yeast</name>
    <dbReference type="NCBI Taxonomy" id="284812"/>
    <lineage>
        <taxon>Eukaryota</taxon>
        <taxon>Fungi</taxon>
        <taxon>Dikarya</taxon>
        <taxon>Ascomycota</taxon>
        <taxon>Taphrinomycotina</taxon>
        <taxon>Schizosaccharomycetes</taxon>
        <taxon>Schizosaccharomycetales</taxon>
        <taxon>Schizosaccharomycetaceae</taxon>
        <taxon>Schizosaccharomyces</taxon>
    </lineage>
</organism>
<feature type="transit peptide" description="Mitochondrion" evidence="2">
    <location>
        <begin position="1"/>
        <end position="26"/>
    </location>
</feature>
<feature type="chain" id="PRO_0000030682" description="Cytochrome b-c1 complex subunit Rieske, mitochondrial">
    <location>
        <begin position="27"/>
        <end position="228"/>
    </location>
</feature>
<feature type="topological domain" description="Mitochondrial matrix" evidence="1">
    <location>
        <begin position="27"/>
        <end position="63"/>
    </location>
</feature>
<feature type="transmembrane region" description="Helical" evidence="1">
    <location>
        <begin position="64"/>
        <end position="93"/>
    </location>
</feature>
<feature type="topological domain" description="Mitochondrial intermembrane" evidence="1">
    <location>
        <begin position="94"/>
        <end position="228"/>
    </location>
</feature>
<feature type="domain" description="Rieske" evidence="3">
    <location>
        <begin position="139"/>
        <end position="227"/>
    </location>
</feature>
<feature type="binding site" evidence="3">
    <location>
        <position position="172"/>
    </location>
    <ligand>
        <name>[2Fe-2S] cluster</name>
        <dbReference type="ChEBI" id="CHEBI:190135"/>
    </ligand>
</feature>
<feature type="binding site" evidence="3">
    <location>
        <position position="174"/>
    </location>
    <ligand>
        <name>[2Fe-2S] cluster</name>
        <dbReference type="ChEBI" id="CHEBI:190135"/>
    </ligand>
</feature>
<feature type="binding site" evidence="3">
    <location>
        <position position="191"/>
    </location>
    <ligand>
        <name>[2Fe-2S] cluster</name>
        <dbReference type="ChEBI" id="CHEBI:190135"/>
    </ligand>
</feature>
<feature type="binding site" evidence="3">
    <location>
        <position position="194"/>
    </location>
    <ligand>
        <name>[2Fe-2S] cluster</name>
        <dbReference type="ChEBI" id="CHEBI:190135"/>
    </ligand>
</feature>
<feature type="disulfide bond" evidence="3">
    <location>
        <begin position="177"/>
        <end position="193"/>
    </location>
</feature>
<feature type="sequence conflict" description="In Ref. 1; AAC49359." evidence="4" ref="1">
    <original>A</original>
    <variation>R</variation>
    <location>
        <position position="183"/>
    </location>
</feature>